<comment type="function">
    <text evidence="1">Core subunit of the mitochondrial membrane respiratory chain NADH dehydrogenase (Complex I) which catalyzes electron transfer from NADH through the respiratory chain, using ubiquinone as an electron acceptor. Essential for the catalytic activity of complex I.</text>
</comment>
<comment type="catalytic activity">
    <reaction evidence="1">
        <text>a ubiquinone + NADH + 5 H(+)(in) = a ubiquinol + NAD(+) + 4 H(+)(out)</text>
        <dbReference type="Rhea" id="RHEA:29091"/>
        <dbReference type="Rhea" id="RHEA-COMP:9565"/>
        <dbReference type="Rhea" id="RHEA-COMP:9566"/>
        <dbReference type="ChEBI" id="CHEBI:15378"/>
        <dbReference type="ChEBI" id="CHEBI:16389"/>
        <dbReference type="ChEBI" id="CHEBI:17976"/>
        <dbReference type="ChEBI" id="CHEBI:57540"/>
        <dbReference type="ChEBI" id="CHEBI:57945"/>
        <dbReference type="EC" id="7.1.1.2"/>
    </reaction>
</comment>
<comment type="subunit">
    <text evidence="1">Core subunit of respiratory chain NADH dehydrogenase (Complex I) which is composed of 45 different subunits. Interacts with TMEM186. Interacts with TMEM242 (By similarity).</text>
</comment>
<comment type="subcellular location">
    <subcellularLocation>
        <location evidence="2">Mitochondrion inner membrane</location>
        <topology evidence="3">Multi-pass membrane protein</topology>
    </subcellularLocation>
</comment>
<comment type="similarity">
    <text evidence="4">Belongs to the complex I subunit 3 family.</text>
</comment>
<protein>
    <recommendedName>
        <fullName evidence="1">NADH-ubiquinone oxidoreductase chain 3</fullName>
        <ecNumber evidence="1">7.1.1.2</ecNumber>
    </recommendedName>
    <alternativeName>
        <fullName>NADH dehydrogenase subunit 3</fullName>
    </alternativeName>
</protein>
<proteinExistence type="inferred from homology"/>
<reference key="1">
    <citation type="submission" date="1995-11" db="EMBL/GenBank/DDBJ databases">
        <title>Mitochondrial DNA analysis of the systematic relationships within the Peromyscus maniculatus species group.</title>
        <authorList>
            <person name="Hogan K.M."/>
            <person name="Davis S.K."/>
            <person name="Greenbaum I.F."/>
        </authorList>
    </citation>
    <scope>NUCLEOTIDE SEQUENCE [GENOMIC DNA]</scope>
</reference>
<organism>
    <name type="scientific">Peromyscus sejugis</name>
    <name type="common">Santa Cruz mouse</name>
    <dbReference type="NCBI Taxonomy" id="44241"/>
    <lineage>
        <taxon>Eukaryota</taxon>
        <taxon>Metazoa</taxon>
        <taxon>Chordata</taxon>
        <taxon>Craniata</taxon>
        <taxon>Vertebrata</taxon>
        <taxon>Euteleostomi</taxon>
        <taxon>Mammalia</taxon>
        <taxon>Eutheria</taxon>
        <taxon>Euarchontoglires</taxon>
        <taxon>Glires</taxon>
        <taxon>Rodentia</taxon>
        <taxon>Myomorpha</taxon>
        <taxon>Muroidea</taxon>
        <taxon>Cricetidae</taxon>
        <taxon>Neotominae</taxon>
        <taxon>Peromyscus</taxon>
    </lineage>
</organism>
<dbReference type="EC" id="7.1.1.2" evidence="1"/>
<dbReference type="EMBL" id="U40253">
    <property type="protein sequence ID" value="AAB17939.1"/>
    <property type="molecule type" value="Genomic_DNA"/>
</dbReference>
<dbReference type="EMBL" id="U40255">
    <property type="protein sequence ID" value="AAB17942.1"/>
    <property type="molecule type" value="Genomic_DNA"/>
</dbReference>
<dbReference type="SMR" id="Q96114"/>
<dbReference type="GO" id="GO:0005743">
    <property type="term" value="C:mitochondrial inner membrane"/>
    <property type="evidence" value="ECO:0000250"/>
    <property type="project" value="UniProtKB"/>
</dbReference>
<dbReference type="GO" id="GO:0030964">
    <property type="term" value="C:NADH dehydrogenase complex"/>
    <property type="evidence" value="ECO:0007669"/>
    <property type="project" value="TreeGrafter"/>
</dbReference>
<dbReference type="GO" id="GO:0008137">
    <property type="term" value="F:NADH dehydrogenase (ubiquinone) activity"/>
    <property type="evidence" value="ECO:0000250"/>
    <property type="project" value="UniProtKB"/>
</dbReference>
<dbReference type="GO" id="GO:0006120">
    <property type="term" value="P:mitochondrial electron transport, NADH to ubiquinone"/>
    <property type="evidence" value="ECO:0000250"/>
    <property type="project" value="UniProtKB"/>
</dbReference>
<dbReference type="FunFam" id="1.20.58.1610:FF:000004">
    <property type="entry name" value="NADH-quinone oxidoreductase subunit A"/>
    <property type="match status" value="1"/>
</dbReference>
<dbReference type="Gene3D" id="1.20.58.1610">
    <property type="entry name" value="NADH:ubiquinone/plastoquinone oxidoreductase, chain 3"/>
    <property type="match status" value="1"/>
</dbReference>
<dbReference type="InterPro" id="IPR000440">
    <property type="entry name" value="NADH_UbQ/plastoQ_OxRdtase_su3"/>
</dbReference>
<dbReference type="InterPro" id="IPR038430">
    <property type="entry name" value="NDAH_ubi_oxred_su3_sf"/>
</dbReference>
<dbReference type="PANTHER" id="PTHR11058">
    <property type="entry name" value="NADH-UBIQUINONE OXIDOREDUCTASE CHAIN 3"/>
    <property type="match status" value="1"/>
</dbReference>
<dbReference type="PANTHER" id="PTHR11058:SF9">
    <property type="entry name" value="NADH-UBIQUINONE OXIDOREDUCTASE CHAIN 3"/>
    <property type="match status" value="1"/>
</dbReference>
<dbReference type="Pfam" id="PF00507">
    <property type="entry name" value="Oxidored_q4"/>
    <property type="match status" value="1"/>
</dbReference>
<sequence length="115" mass="13266">MNMLTALLVNITLSMLLIIVAFWFFQLNLYTEKANPYECGFDPMGSARLPFSMKFFLVAITFLLFDLEIALLLPLPWAIQMYNTNIMMLTAFILISVLALGLAYEWLQKGLEWTE</sequence>
<feature type="chain" id="PRO_0000254955" description="NADH-ubiquinone oxidoreductase chain 3">
    <location>
        <begin position="1"/>
        <end position="115"/>
    </location>
</feature>
<feature type="transmembrane region" description="Helical" evidence="3">
    <location>
        <begin position="5"/>
        <end position="25"/>
    </location>
</feature>
<feature type="transmembrane region" description="Helical" evidence="3">
    <location>
        <begin position="55"/>
        <end position="75"/>
    </location>
</feature>
<feature type="transmembrane region" description="Helical" evidence="3">
    <location>
        <begin position="86"/>
        <end position="106"/>
    </location>
</feature>
<evidence type="ECO:0000250" key="1">
    <source>
        <dbReference type="UniProtKB" id="P03897"/>
    </source>
</evidence>
<evidence type="ECO:0000250" key="2">
    <source>
        <dbReference type="UniProtKB" id="P03898"/>
    </source>
</evidence>
<evidence type="ECO:0000255" key="3"/>
<evidence type="ECO:0000305" key="4"/>
<name>NU3M_PERSJ</name>
<gene>
    <name evidence="1" type="primary">MT-ND3</name>
    <name type="synonym">MTND3</name>
    <name type="synonym">NADH3</name>
    <name type="synonym">ND3</name>
</gene>
<accession>Q96114</accession>
<keyword id="KW-0249">Electron transport</keyword>
<keyword id="KW-0472">Membrane</keyword>
<keyword id="KW-0496">Mitochondrion</keyword>
<keyword id="KW-0999">Mitochondrion inner membrane</keyword>
<keyword id="KW-0520">NAD</keyword>
<keyword id="KW-0679">Respiratory chain</keyword>
<keyword id="KW-1278">Translocase</keyword>
<keyword id="KW-0812">Transmembrane</keyword>
<keyword id="KW-1133">Transmembrane helix</keyword>
<keyword id="KW-0813">Transport</keyword>
<keyword id="KW-0830">Ubiquinone</keyword>
<geneLocation type="mitochondrion"/>